<protein>
    <recommendedName>
        <fullName evidence="1">Small ribosomal subunit protein bS18</fullName>
    </recommendedName>
    <alternativeName>
        <fullName evidence="2">30S ribosomal protein S18</fullName>
    </alternativeName>
</protein>
<sequence length="84" mass="9852">MANREGGRRNSGKLRRAKRKVCAFCMDKSEFIDYKDINKLRKYVTERGKILPRRISGNCAKHQRELTRAIKRARNIALLPFTTE</sequence>
<evidence type="ECO:0000255" key="1">
    <source>
        <dbReference type="HAMAP-Rule" id="MF_00270"/>
    </source>
</evidence>
<evidence type="ECO:0000305" key="2"/>
<keyword id="KW-0687">Ribonucleoprotein</keyword>
<keyword id="KW-0689">Ribosomal protein</keyword>
<keyword id="KW-0694">RNA-binding</keyword>
<keyword id="KW-0699">rRNA-binding</keyword>
<proteinExistence type="inferred from homology"/>
<accession>B9DXQ8</accession>
<gene>
    <name evidence="1" type="primary">rpsR</name>
    <name type="ordered locus">CKR_3450</name>
</gene>
<feature type="chain" id="PRO_1000125795" description="Small ribosomal subunit protein bS18">
    <location>
        <begin position="1"/>
        <end position="84"/>
    </location>
</feature>
<comment type="function">
    <text evidence="1">Binds as a heterodimer with protein bS6 to the central domain of the 16S rRNA, where it helps stabilize the platform of the 30S subunit.</text>
</comment>
<comment type="subunit">
    <text evidence="1">Part of the 30S ribosomal subunit. Forms a tight heterodimer with protein bS6.</text>
</comment>
<comment type="similarity">
    <text evidence="1">Belongs to the bacterial ribosomal protein bS18 family.</text>
</comment>
<dbReference type="EMBL" id="AP009049">
    <property type="protein sequence ID" value="BAH08501.1"/>
    <property type="molecule type" value="Genomic_DNA"/>
</dbReference>
<dbReference type="RefSeq" id="WP_012104221.1">
    <property type="nucleotide sequence ID" value="NC_011837.1"/>
</dbReference>
<dbReference type="SMR" id="B9DXQ8"/>
<dbReference type="KEGG" id="ckr:CKR_3450"/>
<dbReference type="HOGENOM" id="CLU_148710_2_2_9"/>
<dbReference type="Proteomes" id="UP000007969">
    <property type="component" value="Chromosome"/>
</dbReference>
<dbReference type="GO" id="GO:0022627">
    <property type="term" value="C:cytosolic small ribosomal subunit"/>
    <property type="evidence" value="ECO:0007669"/>
    <property type="project" value="TreeGrafter"/>
</dbReference>
<dbReference type="GO" id="GO:0070181">
    <property type="term" value="F:small ribosomal subunit rRNA binding"/>
    <property type="evidence" value="ECO:0007669"/>
    <property type="project" value="TreeGrafter"/>
</dbReference>
<dbReference type="GO" id="GO:0003735">
    <property type="term" value="F:structural constituent of ribosome"/>
    <property type="evidence" value="ECO:0007669"/>
    <property type="project" value="InterPro"/>
</dbReference>
<dbReference type="GO" id="GO:0006412">
    <property type="term" value="P:translation"/>
    <property type="evidence" value="ECO:0007669"/>
    <property type="project" value="UniProtKB-UniRule"/>
</dbReference>
<dbReference type="FunFam" id="4.10.640.10:FF:000004">
    <property type="entry name" value="30S ribosomal protein S18"/>
    <property type="match status" value="1"/>
</dbReference>
<dbReference type="Gene3D" id="4.10.640.10">
    <property type="entry name" value="Ribosomal protein S18"/>
    <property type="match status" value="1"/>
</dbReference>
<dbReference type="HAMAP" id="MF_00270">
    <property type="entry name" value="Ribosomal_bS18"/>
    <property type="match status" value="1"/>
</dbReference>
<dbReference type="InterPro" id="IPR001648">
    <property type="entry name" value="Ribosomal_bS18"/>
</dbReference>
<dbReference type="InterPro" id="IPR018275">
    <property type="entry name" value="Ribosomal_bS18_CS"/>
</dbReference>
<dbReference type="InterPro" id="IPR036870">
    <property type="entry name" value="Ribosomal_bS18_sf"/>
</dbReference>
<dbReference type="NCBIfam" id="TIGR00165">
    <property type="entry name" value="S18"/>
    <property type="match status" value="1"/>
</dbReference>
<dbReference type="PANTHER" id="PTHR13479">
    <property type="entry name" value="30S RIBOSOMAL PROTEIN S18"/>
    <property type="match status" value="1"/>
</dbReference>
<dbReference type="PANTHER" id="PTHR13479:SF40">
    <property type="entry name" value="SMALL RIBOSOMAL SUBUNIT PROTEIN BS18M"/>
    <property type="match status" value="1"/>
</dbReference>
<dbReference type="Pfam" id="PF01084">
    <property type="entry name" value="Ribosomal_S18"/>
    <property type="match status" value="1"/>
</dbReference>
<dbReference type="PRINTS" id="PR00974">
    <property type="entry name" value="RIBOSOMALS18"/>
</dbReference>
<dbReference type="SUPFAM" id="SSF46911">
    <property type="entry name" value="Ribosomal protein S18"/>
    <property type="match status" value="1"/>
</dbReference>
<dbReference type="PROSITE" id="PS00057">
    <property type="entry name" value="RIBOSOMAL_S18"/>
    <property type="match status" value="1"/>
</dbReference>
<organism>
    <name type="scientific">Clostridium kluyveri (strain NBRC 12016)</name>
    <dbReference type="NCBI Taxonomy" id="583346"/>
    <lineage>
        <taxon>Bacteria</taxon>
        <taxon>Bacillati</taxon>
        <taxon>Bacillota</taxon>
        <taxon>Clostridia</taxon>
        <taxon>Eubacteriales</taxon>
        <taxon>Clostridiaceae</taxon>
        <taxon>Clostridium</taxon>
    </lineage>
</organism>
<name>RS18_CLOK1</name>
<reference key="1">
    <citation type="submission" date="2005-09" db="EMBL/GenBank/DDBJ databases">
        <title>Complete genome sequence of Clostridium kluyveri and comparative genomics of Clostridia species.</title>
        <authorList>
            <person name="Inui M."/>
            <person name="Nonaka H."/>
            <person name="Shinoda Y."/>
            <person name="Ikenaga Y."/>
            <person name="Abe M."/>
            <person name="Naito K."/>
            <person name="Vertes A.A."/>
            <person name="Yukawa H."/>
        </authorList>
    </citation>
    <scope>NUCLEOTIDE SEQUENCE [LARGE SCALE GENOMIC DNA]</scope>
    <source>
        <strain>NBRC 12016</strain>
    </source>
</reference>